<sequence>MKLDGYTRLAAVVANPIKHSISPFIHNRAFEATATNGAYVAWEIEASDLVETVANIRRYQMFGINLSMPYKEQVIPYLDKLSDEARLIGAVNTVVNENGNLIGYNTDGKGFFKCLPSFTISGKKMILLGAGGAAKSILAQAILDGVSQISVFVRSVSMEKTRPYLDKLQEQTGFKVDLCALEYVSELQARIAESDLLVNATSVGMDGQFSPVPENIVLPETLLVADIIYQPFETPFLKWARSQGNPAVNGLGMLLYQAAEAFQLWTGKEMPTEEIWQSLTEKYQ</sequence>
<reference key="1">
    <citation type="journal article" date="2010" name="Genome Biol.">
        <title>Structure and dynamics of the pan-genome of Streptococcus pneumoniae and closely related species.</title>
        <authorList>
            <person name="Donati C."/>
            <person name="Hiller N.L."/>
            <person name="Tettelin H."/>
            <person name="Muzzi A."/>
            <person name="Croucher N.J."/>
            <person name="Angiuoli S.V."/>
            <person name="Oggioni M."/>
            <person name="Dunning Hotopp J.C."/>
            <person name="Hu F.Z."/>
            <person name="Riley D.R."/>
            <person name="Covacci A."/>
            <person name="Mitchell T.J."/>
            <person name="Bentley S.D."/>
            <person name="Kilian M."/>
            <person name="Ehrlich G.D."/>
            <person name="Rappuoli R."/>
            <person name="Moxon E.R."/>
            <person name="Masignani V."/>
        </authorList>
    </citation>
    <scope>NUCLEOTIDE SEQUENCE [LARGE SCALE GENOMIC DNA]</scope>
    <source>
        <strain>70585</strain>
    </source>
</reference>
<evidence type="ECO:0000255" key="1">
    <source>
        <dbReference type="HAMAP-Rule" id="MF_00222"/>
    </source>
</evidence>
<gene>
    <name evidence="1" type="primary">aroE</name>
    <name type="ordered locus">SP70585_1415</name>
</gene>
<dbReference type="EC" id="1.1.1.25" evidence="1"/>
<dbReference type="EMBL" id="CP000918">
    <property type="protein sequence ID" value="ACO16647.1"/>
    <property type="molecule type" value="Genomic_DNA"/>
</dbReference>
<dbReference type="RefSeq" id="WP_000762482.1">
    <property type="nucleotide sequence ID" value="NC_012468.1"/>
</dbReference>
<dbReference type="SMR" id="C1C7X7"/>
<dbReference type="KEGG" id="snm:SP70585_1415"/>
<dbReference type="HOGENOM" id="CLU_044063_4_4_9"/>
<dbReference type="UniPathway" id="UPA00053">
    <property type="reaction ID" value="UER00087"/>
</dbReference>
<dbReference type="Proteomes" id="UP000002211">
    <property type="component" value="Chromosome"/>
</dbReference>
<dbReference type="GO" id="GO:0050661">
    <property type="term" value="F:NADP binding"/>
    <property type="evidence" value="ECO:0007669"/>
    <property type="project" value="InterPro"/>
</dbReference>
<dbReference type="GO" id="GO:0004764">
    <property type="term" value="F:shikimate 3-dehydrogenase (NADP+) activity"/>
    <property type="evidence" value="ECO:0007669"/>
    <property type="project" value="UniProtKB-UniRule"/>
</dbReference>
<dbReference type="GO" id="GO:0008652">
    <property type="term" value="P:amino acid biosynthetic process"/>
    <property type="evidence" value="ECO:0007669"/>
    <property type="project" value="UniProtKB-KW"/>
</dbReference>
<dbReference type="GO" id="GO:0009073">
    <property type="term" value="P:aromatic amino acid family biosynthetic process"/>
    <property type="evidence" value="ECO:0007669"/>
    <property type="project" value="UniProtKB-KW"/>
</dbReference>
<dbReference type="GO" id="GO:0009423">
    <property type="term" value="P:chorismate biosynthetic process"/>
    <property type="evidence" value="ECO:0007669"/>
    <property type="project" value="UniProtKB-UniRule"/>
</dbReference>
<dbReference type="GO" id="GO:0019632">
    <property type="term" value="P:shikimate metabolic process"/>
    <property type="evidence" value="ECO:0007669"/>
    <property type="project" value="InterPro"/>
</dbReference>
<dbReference type="CDD" id="cd01065">
    <property type="entry name" value="NAD_bind_Shikimate_DH"/>
    <property type="match status" value="1"/>
</dbReference>
<dbReference type="FunFam" id="3.40.50.10860:FF:000004">
    <property type="entry name" value="Quinate/shikimate dehydrogenase"/>
    <property type="match status" value="1"/>
</dbReference>
<dbReference type="FunFam" id="3.40.50.720:FF:000505">
    <property type="entry name" value="Shikimate dehydrogenase (NADP(+))"/>
    <property type="match status" value="1"/>
</dbReference>
<dbReference type="Gene3D" id="3.40.50.10860">
    <property type="entry name" value="Leucine Dehydrogenase, chain A, domain 1"/>
    <property type="match status" value="1"/>
</dbReference>
<dbReference type="Gene3D" id="3.40.50.720">
    <property type="entry name" value="NAD(P)-binding Rossmann-like Domain"/>
    <property type="match status" value="1"/>
</dbReference>
<dbReference type="HAMAP" id="MF_00222">
    <property type="entry name" value="Shikimate_DH_AroE"/>
    <property type="match status" value="1"/>
</dbReference>
<dbReference type="InterPro" id="IPR046346">
    <property type="entry name" value="Aminoacid_DH-like_N_sf"/>
</dbReference>
<dbReference type="InterPro" id="IPR036291">
    <property type="entry name" value="NAD(P)-bd_dom_sf"/>
</dbReference>
<dbReference type="InterPro" id="IPR041121">
    <property type="entry name" value="SDH_C"/>
</dbReference>
<dbReference type="InterPro" id="IPR011342">
    <property type="entry name" value="Shikimate_DH"/>
</dbReference>
<dbReference type="InterPro" id="IPR013708">
    <property type="entry name" value="Shikimate_DH-bd_N"/>
</dbReference>
<dbReference type="InterPro" id="IPR022893">
    <property type="entry name" value="Shikimate_DH_fam"/>
</dbReference>
<dbReference type="NCBIfam" id="TIGR00507">
    <property type="entry name" value="aroE"/>
    <property type="match status" value="1"/>
</dbReference>
<dbReference type="NCBIfam" id="NF001315">
    <property type="entry name" value="PRK00258.2-4"/>
    <property type="match status" value="1"/>
</dbReference>
<dbReference type="PANTHER" id="PTHR21089:SF1">
    <property type="entry name" value="BIFUNCTIONAL 3-DEHYDROQUINATE DEHYDRATASE_SHIKIMATE DEHYDROGENASE, CHLOROPLASTIC"/>
    <property type="match status" value="1"/>
</dbReference>
<dbReference type="PANTHER" id="PTHR21089">
    <property type="entry name" value="SHIKIMATE DEHYDROGENASE"/>
    <property type="match status" value="1"/>
</dbReference>
<dbReference type="Pfam" id="PF18317">
    <property type="entry name" value="SDH_C"/>
    <property type="match status" value="1"/>
</dbReference>
<dbReference type="Pfam" id="PF08501">
    <property type="entry name" value="Shikimate_dh_N"/>
    <property type="match status" value="1"/>
</dbReference>
<dbReference type="SUPFAM" id="SSF53223">
    <property type="entry name" value="Aminoacid dehydrogenase-like, N-terminal domain"/>
    <property type="match status" value="1"/>
</dbReference>
<dbReference type="SUPFAM" id="SSF51735">
    <property type="entry name" value="NAD(P)-binding Rossmann-fold domains"/>
    <property type="match status" value="1"/>
</dbReference>
<name>AROE_STRP7</name>
<protein>
    <recommendedName>
        <fullName evidence="1">Shikimate dehydrogenase (NADP(+))</fullName>
        <shortName evidence="1">SDH</shortName>
        <ecNumber evidence="1">1.1.1.25</ecNumber>
    </recommendedName>
</protein>
<organism>
    <name type="scientific">Streptococcus pneumoniae (strain 70585)</name>
    <dbReference type="NCBI Taxonomy" id="488221"/>
    <lineage>
        <taxon>Bacteria</taxon>
        <taxon>Bacillati</taxon>
        <taxon>Bacillota</taxon>
        <taxon>Bacilli</taxon>
        <taxon>Lactobacillales</taxon>
        <taxon>Streptococcaceae</taxon>
        <taxon>Streptococcus</taxon>
    </lineage>
</organism>
<comment type="function">
    <text evidence="1">Involved in the biosynthesis of the chorismate, which leads to the biosynthesis of aromatic amino acids. Catalyzes the reversible NADPH linked reduction of 3-dehydroshikimate (DHSA) to yield shikimate (SA).</text>
</comment>
<comment type="catalytic activity">
    <reaction evidence="1">
        <text>shikimate + NADP(+) = 3-dehydroshikimate + NADPH + H(+)</text>
        <dbReference type="Rhea" id="RHEA:17737"/>
        <dbReference type="ChEBI" id="CHEBI:15378"/>
        <dbReference type="ChEBI" id="CHEBI:16630"/>
        <dbReference type="ChEBI" id="CHEBI:36208"/>
        <dbReference type="ChEBI" id="CHEBI:57783"/>
        <dbReference type="ChEBI" id="CHEBI:58349"/>
        <dbReference type="EC" id="1.1.1.25"/>
    </reaction>
</comment>
<comment type="pathway">
    <text evidence="1">Metabolic intermediate biosynthesis; chorismate biosynthesis; chorismate from D-erythrose 4-phosphate and phosphoenolpyruvate: step 4/7.</text>
</comment>
<comment type="subunit">
    <text evidence="1">Homodimer.</text>
</comment>
<comment type="similarity">
    <text evidence="1">Belongs to the shikimate dehydrogenase family.</text>
</comment>
<keyword id="KW-0028">Amino-acid biosynthesis</keyword>
<keyword id="KW-0057">Aromatic amino acid biosynthesis</keyword>
<keyword id="KW-0521">NADP</keyword>
<keyword id="KW-0560">Oxidoreductase</keyword>
<proteinExistence type="inferred from homology"/>
<feature type="chain" id="PRO_1000124895" description="Shikimate dehydrogenase (NADP(+))">
    <location>
        <begin position="1"/>
        <end position="284"/>
    </location>
</feature>
<feature type="active site" description="Proton acceptor" evidence="1">
    <location>
        <position position="71"/>
    </location>
</feature>
<feature type="binding site" evidence="1">
    <location>
        <begin position="20"/>
        <end position="22"/>
    </location>
    <ligand>
        <name>shikimate</name>
        <dbReference type="ChEBI" id="CHEBI:36208"/>
    </ligand>
</feature>
<feature type="binding site" evidence="1">
    <location>
        <position position="67"/>
    </location>
    <ligand>
        <name>shikimate</name>
        <dbReference type="ChEBI" id="CHEBI:36208"/>
    </ligand>
</feature>
<feature type="binding site" evidence="1">
    <location>
        <position position="83"/>
    </location>
    <ligand>
        <name>NADP(+)</name>
        <dbReference type="ChEBI" id="CHEBI:58349"/>
    </ligand>
</feature>
<feature type="binding site" evidence="1">
    <location>
        <position position="92"/>
    </location>
    <ligand>
        <name>shikimate</name>
        <dbReference type="ChEBI" id="CHEBI:36208"/>
    </ligand>
</feature>
<feature type="binding site" evidence="1">
    <location>
        <position position="107"/>
    </location>
    <ligand>
        <name>shikimate</name>
        <dbReference type="ChEBI" id="CHEBI:36208"/>
    </ligand>
</feature>
<feature type="binding site" evidence="1">
    <location>
        <begin position="129"/>
        <end position="133"/>
    </location>
    <ligand>
        <name>NADP(+)</name>
        <dbReference type="ChEBI" id="CHEBI:58349"/>
    </ligand>
</feature>
<feature type="binding site" evidence="1">
    <location>
        <position position="227"/>
    </location>
    <ligand>
        <name>NADP(+)</name>
        <dbReference type="ChEBI" id="CHEBI:58349"/>
    </ligand>
</feature>
<feature type="binding site" evidence="1">
    <location>
        <position position="229"/>
    </location>
    <ligand>
        <name>shikimate</name>
        <dbReference type="ChEBI" id="CHEBI:36208"/>
    </ligand>
</feature>
<feature type="binding site" evidence="1">
    <location>
        <position position="250"/>
    </location>
    <ligand>
        <name>NADP(+)</name>
        <dbReference type="ChEBI" id="CHEBI:58349"/>
    </ligand>
</feature>
<accession>C1C7X7</accession>